<feature type="chain" id="PRO_1000205398" description="Small ribosomal subunit protein bS6">
    <location>
        <begin position="1"/>
        <end position="134"/>
    </location>
</feature>
<feature type="region of interest" description="Disordered" evidence="2">
    <location>
        <begin position="103"/>
        <end position="134"/>
    </location>
</feature>
<feature type="compositionally biased region" description="Low complexity" evidence="2">
    <location>
        <begin position="118"/>
        <end position="134"/>
    </location>
</feature>
<dbReference type="EMBL" id="CP001661">
    <property type="protein sequence ID" value="ACT17532.1"/>
    <property type="molecule type" value="Genomic_DNA"/>
</dbReference>
<dbReference type="SMR" id="C6E503"/>
<dbReference type="STRING" id="443144.GM21_1476"/>
<dbReference type="KEGG" id="gem:GM21_1476"/>
<dbReference type="eggNOG" id="COG0360">
    <property type="taxonomic scope" value="Bacteria"/>
</dbReference>
<dbReference type="HOGENOM" id="CLU_113441_4_0_7"/>
<dbReference type="OrthoDB" id="9812702at2"/>
<dbReference type="GO" id="GO:0022627">
    <property type="term" value="C:cytosolic small ribosomal subunit"/>
    <property type="evidence" value="ECO:0007669"/>
    <property type="project" value="TreeGrafter"/>
</dbReference>
<dbReference type="GO" id="GO:0070181">
    <property type="term" value="F:small ribosomal subunit rRNA binding"/>
    <property type="evidence" value="ECO:0007669"/>
    <property type="project" value="TreeGrafter"/>
</dbReference>
<dbReference type="GO" id="GO:0003735">
    <property type="term" value="F:structural constituent of ribosome"/>
    <property type="evidence" value="ECO:0007669"/>
    <property type="project" value="InterPro"/>
</dbReference>
<dbReference type="GO" id="GO:0006412">
    <property type="term" value="P:translation"/>
    <property type="evidence" value="ECO:0007669"/>
    <property type="project" value="UniProtKB-UniRule"/>
</dbReference>
<dbReference type="CDD" id="cd00473">
    <property type="entry name" value="bS6"/>
    <property type="match status" value="1"/>
</dbReference>
<dbReference type="Gene3D" id="3.30.70.60">
    <property type="match status" value="1"/>
</dbReference>
<dbReference type="HAMAP" id="MF_00360">
    <property type="entry name" value="Ribosomal_bS6"/>
    <property type="match status" value="1"/>
</dbReference>
<dbReference type="InterPro" id="IPR000529">
    <property type="entry name" value="Ribosomal_bS6"/>
</dbReference>
<dbReference type="InterPro" id="IPR035980">
    <property type="entry name" value="Ribosomal_bS6_sf"/>
</dbReference>
<dbReference type="InterPro" id="IPR020814">
    <property type="entry name" value="Ribosomal_S6_plastid/chlpt"/>
</dbReference>
<dbReference type="InterPro" id="IPR014717">
    <property type="entry name" value="Transl_elong_EF1B/ribsomal_bS6"/>
</dbReference>
<dbReference type="NCBIfam" id="TIGR00166">
    <property type="entry name" value="S6"/>
    <property type="match status" value="1"/>
</dbReference>
<dbReference type="PANTHER" id="PTHR21011">
    <property type="entry name" value="MITOCHONDRIAL 28S RIBOSOMAL PROTEIN S6"/>
    <property type="match status" value="1"/>
</dbReference>
<dbReference type="PANTHER" id="PTHR21011:SF1">
    <property type="entry name" value="SMALL RIBOSOMAL SUBUNIT PROTEIN BS6M"/>
    <property type="match status" value="1"/>
</dbReference>
<dbReference type="Pfam" id="PF01250">
    <property type="entry name" value="Ribosomal_S6"/>
    <property type="match status" value="1"/>
</dbReference>
<dbReference type="SUPFAM" id="SSF54995">
    <property type="entry name" value="Ribosomal protein S6"/>
    <property type="match status" value="1"/>
</dbReference>
<evidence type="ECO:0000255" key="1">
    <source>
        <dbReference type="HAMAP-Rule" id="MF_00360"/>
    </source>
</evidence>
<evidence type="ECO:0000256" key="2">
    <source>
        <dbReference type="SAM" id="MobiDB-lite"/>
    </source>
</evidence>
<evidence type="ECO:0000305" key="3"/>
<reference key="1">
    <citation type="submission" date="2009-07" db="EMBL/GenBank/DDBJ databases">
        <title>Complete sequence of Geobacter sp. M21.</title>
        <authorList>
            <consortium name="US DOE Joint Genome Institute"/>
            <person name="Lucas S."/>
            <person name="Copeland A."/>
            <person name="Lapidus A."/>
            <person name="Glavina del Rio T."/>
            <person name="Dalin E."/>
            <person name="Tice H."/>
            <person name="Bruce D."/>
            <person name="Goodwin L."/>
            <person name="Pitluck S."/>
            <person name="Saunders E."/>
            <person name="Brettin T."/>
            <person name="Detter J.C."/>
            <person name="Han C."/>
            <person name="Larimer F."/>
            <person name="Land M."/>
            <person name="Hauser L."/>
            <person name="Kyrpides N."/>
            <person name="Ovchinnikova G."/>
            <person name="Lovley D."/>
        </authorList>
    </citation>
    <scope>NUCLEOTIDE SEQUENCE [LARGE SCALE GENOMIC DNA]</scope>
    <source>
        <strain>M21</strain>
    </source>
</reference>
<comment type="function">
    <text evidence="1">Binds together with bS18 to 16S ribosomal RNA.</text>
</comment>
<comment type="similarity">
    <text evidence="1">Belongs to the bacterial ribosomal protein bS6 family.</text>
</comment>
<gene>
    <name evidence="1" type="primary">rpsF</name>
    <name type="ordered locus">GM21_1476</name>
</gene>
<organism>
    <name type="scientific">Geobacter sp. (strain M21)</name>
    <dbReference type="NCBI Taxonomy" id="443144"/>
    <lineage>
        <taxon>Bacteria</taxon>
        <taxon>Pseudomonadati</taxon>
        <taxon>Thermodesulfobacteriota</taxon>
        <taxon>Desulfuromonadia</taxon>
        <taxon>Geobacterales</taxon>
        <taxon>Geobacteraceae</taxon>
        <taxon>Geobacter</taxon>
    </lineage>
</organism>
<proteinExistence type="inferred from homology"/>
<keyword id="KW-0687">Ribonucleoprotein</keyword>
<keyword id="KW-0689">Ribosomal protein</keyword>
<keyword id="KW-0694">RNA-binding</keyword>
<keyword id="KW-0699">rRNA-binding</keyword>
<protein>
    <recommendedName>
        <fullName evidence="1">Small ribosomal subunit protein bS6</fullName>
    </recommendedName>
    <alternativeName>
        <fullName evidence="3">30S ribosomal protein S6</fullName>
    </alternativeName>
</protein>
<name>RS6_GEOSM</name>
<sequence length="134" mass="14986">MSRMYETIYIVQPDLGDEEIKALSTKVQDVVAGMNGDFKRLEDWGTRKLAYPINKNPRGRYFYLRFDGDSGLIAELERRLRLDDKVIRYQSVKLETEVVAPAAAPVKSAEEGTEEVAAEAATEAPAETTTTVEV</sequence>
<accession>C6E503</accession>